<keyword id="KW-0227">DNA damage</keyword>
<keyword id="KW-0234">DNA repair</keyword>
<keyword id="KW-0238">DNA-binding</keyword>
<keyword id="KW-0326">Glycosidase</keyword>
<keyword id="KW-0378">Hydrolase</keyword>
<keyword id="KW-0456">Lyase</keyword>
<keyword id="KW-0479">Metal-binding</keyword>
<keyword id="KW-0511">Multifunctional enzyme</keyword>
<keyword id="KW-1185">Reference proteome</keyword>
<keyword id="KW-0862">Zinc</keyword>
<keyword id="KW-0863">Zinc-finger</keyword>
<accession>Q1GN82</accession>
<name>FPG_SPHAL</name>
<gene>
    <name evidence="2" type="primary">mutM</name>
    <name evidence="2" type="synonym">fpg</name>
    <name type="ordered locus">Sala_3187</name>
</gene>
<sequence length="270" mass="29230">MPELPEVETTVRGLVPFLEGQRLAAVTTFRPDLRRPFPVDLAQRLTGATVTRLSRRAKYGIVSTDRDDHMIFHLGMSGRWRTEGGEPGKHDHLLLETGAGHRLFLHDPRRFGSIDLVAGDPLASFAAFVTLGPEPLSDDFDAALLARAFAARRAPVKAMLLDQNVVAGLGNIYVCEALNMARISPLMPAAGVPKAKLAALVSAIRAVLTAAIAAGGSTLRDFLSPDGDLGYFAKDWRVYGREGEACECGGAIVRVVQSGRSTFYCRKCQR</sequence>
<reference key="1">
    <citation type="journal article" date="2009" name="Proc. Natl. Acad. Sci. U.S.A.">
        <title>The genomic basis of trophic strategy in marine bacteria.</title>
        <authorList>
            <person name="Lauro F.M."/>
            <person name="McDougald D."/>
            <person name="Thomas T."/>
            <person name="Williams T.J."/>
            <person name="Egan S."/>
            <person name="Rice S."/>
            <person name="DeMaere M.Z."/>
            <person name="Ting L."/>
            <person name="Ertan H."/>
            <person name="Johnson J."/>
            <person name="Ferriera S."/>
            <person name="Lapidus A."/>
            <person name="Anderson I."/>
            <person name="Kyrpides N."/>
            <person name="Munk A.C."/>
            <person name="Detter C."/>
            <person name="Han C.S."/>
            <person name="Brown M.V."/>
            <person name="Robb F.T."/>
            <person name="Kjelleberg S."/>
            <person name="Cavicchioli R."/>
        </authorList>
    </citation>
    <scope>NUCLEOTIDE SEQUENCE [LARGE SCALE GENOMIC DNA]</scope>
    <source>
        <strain>DSM 13593 / LMG 18877 / RB2256</strain>
    </source>
</reference>
<organism>
    <name type="scientific">Sphingopyxis alaskensis (strain DSM 13593 / LMG 18877 / RB2256)</name>
    <name type="common">Sphingomonas alaskensis</name>
    <dbReference type="NCBI Taxonomy" id="317655"/>
    <lineage>
        <taxon>Bacteria</taxon>
        <taxon>Pseudomonadati</taxon>
        <taxon>Pseudomonadota</taxon>
        <taxon>Alphaproteobacteria</taxon>
        <taxon>Sphingomonadales</taxon>
        <taxon>Sphingomonadaceae</taxon>
        <taxon>Sphingopyxis</taxon>
    </lineage>
</organism>
<dbReference type="EC" id="3.2.2.23" evidence="2"/>
<dbReference type="EC" id="4.2.99.18" evidence="2"/>
<dbReference type="EMBL" id="CP000356">
    <property type="protein sequence ID" value="ABF54890.1"/>
    <property type="molecule type" value="Genomic_DNA"/>
</dbReference>
<dbReference type="RefSeq" id="WP_011543452.1">
    <property type="nucleotide sequence ID" value="NC_008048.1"/>
</dbReference>
<dbReference type="SMR" id="Q1GN82"/>
<dbReference type="STRING" id="317655.Sala_3187"/>
<dbReference type="KEGG" id="sal:Sala_3187"/>
<dbReference type="eggNOG" id="COG0266">
    <property type="taxonomic scope" value="Bacteria"/>
</dbReference>
<dbReference type="HOGENOM" id="CLU_038423_1_1_5"/>
<dbReference type="OrthoDB" id="9800855at2"/>
<dbReference type="Proteomes" id="UP000006578">
    <property type="component" value="Chromosome"/>
</dbReference>
<dbReference type="GO" id="GO:0034039">
    <property type="term" value="F:8-oxo-7,8-dihydroguanine DNA N-glycosylase activity"/>
    <property type="evidence" value="ECO:0007669"/>
    <property type="project" value="TreeGrafter"/>
</dbReference>
<dbReference type="GO" id="GO:0140078">
    <property type="term" value="F:class I DNA-(apurinic or apyrimidinic site) endonuclease activity"/>
    <property type="evidence" value="ECO:0007669"/>
    <property type="project" value="UniProtKB-EC"/>
</dbReference>
<dbReference type="GO" id="GO:0003684">
    <property type="term" value="F:damaged DNA binding"/>
    <property type="evidence" value="ECO:0007669"/>
    <property type="project" value="InterPro"/>
</dbReference>
<dbReference type="GO" id="GO:0008270">
    <property type="term" value="F:zinc ion binding"/>
    <property type="evidence" value="ECO:0007669"/>
    <property type="project" value="UniProtKB-UniRule"/>
</dbReference>
<dbReference type="GO" id="GO:0006284">
    <property type="term" value="P:base-excision repair"/>
    <property type="evidence" value="ECO:0007669"/>
    <property type="project" value="InterPro"/>
</dbReference>
<dbReference type="CDD" id="cd08966">
    <property type="entry name" value="EcFpg-like_N"/>
    <property type="match status" value="1"/>
</dbReference>
<dbReference type="FunFam" id="1.10.8.50:FF:000003">
    <property type="entry name" value="Formamidopyrimidine-DNA glycosylase"/>
    <property type="match status" value="1"/>
</dbReference>
<dbReference type="Gene3D" id="1.10.8.50">
    <property type="match status" value="1"/>
</dbReference>
<dbReference type="Gene3D" id="3.20.190.10">
    <property type="entry name" value="MutM-like, N-terminal"/>
    <property type="match status" value="1"/>
</dbReference>
<dbReference type="HAMAP" id="MF_00103">
    <property type="entry name" value="Fapy_DNA_glycosyl"/>
    <property type="match status" value="1"/>
</dbReference>
<dbReference type="InterPro" id="IPR015886">
    <property type="entry name" value="DNA_glyclase/AP_lyase_DNA-bd"/>
</dbReference>
<dbReference type="InterPro" id="IPR015887">
    <property type="entry name" value="DNA_glyclase_Znf_dom_DNA_BS"/>
</dbReference>
<dbReference type="InterPro" id="IPR020629">
    <property type="entry name" value="Formamido-pyr_DNA_Glyclase"/>
</dbReference>
<dbReference type="InterPro" id="IPR012319">
    <property type="entry name" value="FPG_cat"/>
</dbReference>
<dbReference type="InterPro" id="IPR035937">
    <property type="entry name" value="MutM-like_N-ter"/>
</dbReference>
<dbReference type="InterPro" id="IPR010979">
    <property type="entry name" value="Ribosomal_uS13-like_H2TH"/>
</dbReference>
<dbReference type="InterPro" id="IPR000214">
    <property type="entry name" value="Znf_DNA_glyclase/AP_lyase"/>
</dbReference>
<dbReference type="InterPro" id="IPR010663">
    <property type="entry name" value="Znf_FPG/IleRS"/>
</dbReference>
<dbReference type="NCBIfam" id="TIGR00577">
    <property type="entry name" value="fpg"/>
    <property type="match status" value="1"/>
</dbReference>
<dbReference type="NCBIfam" id="NF002211">
    <property type="entry name" value="PRK01103.1"/>
    <property type="match status" value="1"/>
</dbReference>
<dbReference type="PANTHER" id="PTHR22993">
    <property type="entry name" value="FORMAMIDOPYRIMIDINE-DNA GLYCOSYLASE"/>
    <property type="match status" value="1"/>
</dbReference>
<dbReference type="PANTHER" id="PTHR22993:SF9">
    <property type="entry name" value="FORMAMIDOPYRIMIDINE-DNA GLYCOSYLASE"/>
    <property type="match status" value="1"/>
</dbReference>
<dbReference type="Pfam" id="PF01149">
    <property type="entry name" value="Fapy_DNA_glyco"/>
    <property type="match status" value="1"/>
</dbReference>
<dbReference type="Pfam" id="PF06831">
    <property type="entry name" value="H2TH"/>
    <property type="match status" value="1"/>
</dbReference>
<dbReference type="Pfam" id="PF06827">
    <property type="entry name" value="zf-FPG_IleRS"/>
    <property type="match status" value="1"/>
</dbReference>
<dbReference type="SMART" id="SM00898">
    <property type="entry name" value="Fapy_DNA_glyco"/>
    <property type="match status" value="1"/>
</dbReference>
<dbReference type="SMART" id="SM01232">
    <property type="entry name" value="H2TH"/>
    <property type="match status" value="1"/>
</dbReference>
<dbReference type="SUPFAM" id="SSF57716">
    <property type="entry name" value="Glucocorticoid receptor-like (DNA-binding domain)"/>
    <property type="match status" value="1"/>
</dbReference>
<dbReference type="SUPFAM" id="SSF81624">
    <property type="entry name" value="N-terminal domain of MutM-like DNA repair proteins"/>
    <property type="match status" value="1"/>
</dbReference>
<dbReference type="SUPFAM" id="SSF46946">
    <property type="entry name" value="S13-like H2TH domain"/>
    <property type="match status" value="1"/>
</dbReference>
<dbReference type="PROSITE" id="PS51068">
    <property type="entry name" value="FPG_CAT"/>
    <property type="match status" value="1"/>
</dbReference>
<dbReference type="PROSITE" id="PS01242">
    <property type="entry name" value="ZF_FPG_1"/>
    <property type="match status" value="1"/>
</dbReference>
<dbReference type="PROSITE" id="PS51066">
    <property type="entry name" value="ZF_FPG_2"/>
    <property type="match status" value="1"/>
</dbReference>
<evidence type="ECO:0000250" key="1"/>
<evidence type="ECO:0000255" key="2">
    <source>
        <dbReference type="HAMAP-Rule" id="MF_00103"/>
    </source>
</evidence>
<protein>
    <recommendedName>
        <fullName evidence="2">Formamidopyrimidine-DNA glycosylase</fullName>
        <shortName evidence="2">Fapy-DNA glycosylase</shortName>
        <ecNumber evidence="2">3.2.2.23</ecNumber>
    </recommendedName>
    <alternativeName>
        <fullName evidence="2">DNA-(apurinic or apyrimidinic site) lyase MutM</fullName>
        <shortName evidence="2">AP lyase MutM</shortName>
        <ecNumber evidence="2">4.2.99.18</ecNumber>
    </alternativeName>
</protein>
<proteinExistence type="inferred from homology"/>
<comment type="function">
    <text evidence="2">Involved in base excision repair of DNA damaged by oxidation or by mutagenic agents. Acts as a DNA glycosylase that recognizes and removes damaged bases. Has a preference for oxidized purines, such as 7,8-dihydro-8-oxoguanine (8-oxoG). Has AP (apurinic/apyrimidinic) lyase activity and introduces nicks in the DNA strand. Cleaves the DNA backbone by beta-delta elimination to generate a single-strand break at the site of the removed base with both 3'- and 5'-phosphates.</text>
</comment>
<comment type="catalytic activity">
    <reaction evidence="2">
        <text>Hydrolysis of DNA containing ring-opened 7-methylguanine residues, releasing 2,6-diamino-4-hydroxy-5-(N-methyl)formamidopyrimidine.</text>
        <dbReference type="EC" id="3.2.2.23"/>
    </reaction>
</comment>
<comment type="catalytic activity">
    <reaction evidence="2">
        <text>2'-deoxyribonucleotide-(2'-deoxyribose 5'-phosphate)-2'-deoxyribonucleotide-DNA = a 3'-end 2'-deoxyribonucleotide-(2,3-dehydro-2,3-deoxyribose 5'-phosphate)-DNA + a 5'-end 5'-phospho-2'-deoxyribonucleoside-DNA + H(+)</text>
        <dbReference type="Rhea" id="RHEA:66592"/>
        <dbReference type="Rhea" id="RHEA-COMP:13180"/>
        <dbReference type="Rhea" id="RHEA-COMP:16897"/>
        <dbReference type="Rhea" id="RHEA-COMP:17067"/>
        <dbReference type="ChEBI" id="CHEBI:15378"/>
        <dbReference type="ChEBI" id="CHEBI:136412"/>
        <dbReference type="ChEBI" id="CHEBI:157695"/>
        <dbReference type="ChEBI" id="CHEBI:167181"/>
        <dbReference type="EC" id="4.2.99.18"/>
    </reaction>
</comment>
<comment type="cofactor">
    <cofactor evidence="2">
        <name>Zn(2+)</name>
        <dbReference type="ChEBI" id="CHEBI:29105"/>
    </cofactor>
    <text evidence="2">Binds 1 zinc ion per subunit.</text>
</comment>
<comment type="subunit">
    <text evidence="2">Monomer.</text>
</comment>
<comment type="similarity">
    <text evidence="2">Belongs to the FPG family.</text>
</comment>
<feature type="initiator methionine" description="Removed" evidence="1">
    <location>
        <position position="1"/>
    </location>
</feature>
<feature type="chain" id="PRO_1000008783" description="Formamidopyrimidine-DNA glycosylase">
    <location>
        <begin position="2"/>
        <end position="270"/>
    </location>
</feature>
<feature type="zinc finger region" description="FPG-type" evidence="2">
    <location>
        <begin position="237"/>
        <end position="270"/>
    </location>
</feature>
<feature type="active site" description="Schiff-base intermediate with DNA" evidence="2">
    <location>
        <position position="2"/>
    </location>
</feature>
<feature type="active site" description="Proton donor" evidence="2">
    <location>
        <position position="3"/>
    </location>
</feature>
<feature type="active site" description="Proton donor; for beta-elimination activity" evidence="2">
    <location>
        <position position="58"/>
    </location>
</feature>
<feature type="active site" description="Proton donor; for delta-elimination activity" evidence="2">
    <location>
        <position position="260"/>
    </location>
</feature>
<feature type="binding site" evidence="2">
    <location>
        <position position="90"/>
    </location>
    <ligand>
        <name>DNA</name>
        <dbReference type="ChEBI" id="CHEBI:16991"/>
    </ligand>
</feature>
<feature type="binding site" evidence="2">
    <location>
        <position position="109"/>
    </location>
    <ligand>
        <name>DNA</name>
        <dbReference type="ChEBI" id="CHEBI:16991"/>
    </ligand>
</feature>
<feature type="binding site" evidence="2">
    <location>
        <position position="152"/>
    </location>
    <ligand>
        <name>DNA</name>
        <dbReference type="ChEBI" id="CHEBI:16991"/>
    </ligand>
</feature>